<gene>
    <name type="primary">SPC24</name>
    <name type="ordered locus">YMR117C</name>
    <name type="ORF">YM9718.16C</name>
</gene>
<dbReference type="EMBL" id="Z49702">
    <property type="protein sequence ID" value="CAA89755.1"/>
    <property type="molecule type" value="Genomic_DNA"/>
</dbReference>
<dbReference type="EMBL" id="BK006946">
    <property type="protein sequence ID" value="DAA10014.1"/>
    <property type="molecule type" value="Genomic_DNA"/>
</dbReference>
<dbReference type="PIR" id="S54579">
    <property type="entry name" value="S54579"/>
</dbReference>
<dbReference type="RefSeq" id="NP_013835.1">
    <property type="nucleotide sequence ID" value="NM_001182617.1"/>
</dbReference>
<dbReference type="PDB" id="2FTX">
    <property type="method" value="X-ray"/>
    <property type="resolution" value="1.90 A"/>
    <property type="chains" value="B=154-213"/>
</dbReference>
<dbReference type="PDB" id="2FV4">
    <property type="method" value="NMR"/>
    <property type="chains" value="B=138-213"/>
</dbReference>
<dbReference type="PDB" id="4GEQ">
    <property type="method" value="X-ray"/>
    <property type="resolution" value="2.01 A"/>
    <property type="chains" value="B/D=155-213"/>
</dbReference>
<dbReference type="PDB" id="5T6J">
    <property type="method" value="X-ray"/>
    <property type="resolution" value="1.75 A"/>
    <property type="chains" value="A=155-213"/>
</dbReference>
<dbReference type="PDB" id="5TCS">
    <property type="method" value="X-ray"/>
    <property type="resolution" value="2.83 A"/>
    <property type="chains" value="C=1-213"/>
</dbReference>
<dbReference type="PDB" id="5TD8">
    <property type="method" value="X-ray"/>
    <property type="resolution" value="7.53 A"/>
    <property type="chains" value="C=1-213"/>
</dbReference>
<dbReference type="PDB" id="7KDF">
    <property type="method" value="X-ray"/>
    <property type="resolution" value="2.72 A"/>
    <property type="chains" value="C=1-213"/>
</dbReference>
<dbReference type="PDB" id="8V10">
    <property type="method" value="X-ray"/>
    <property type="resolution" value="3.02 A"/>
    <property type="chains" value="C=1-213"/>
</dbReference>
<dbReference type="PDB" id="8V11">
    <property type="method" value="X-ray"/>
    <property type="resolution" value="3.95 A"/>
    <property type="chains" value="C/G=1-212"/>
</dbReference>
<dbReference type="PDBsum" id="2FTX"/>
<dbReference type="PDBsum" id="2FV4"/>
<dbReference type="PDBsum" id="4GEQ"/>
<dbReference type="PDBsum" id="5T6J"/>
<dbReference type="PDBsum" id="5TCS"/>
<dbReference type="PDBsum" id="5TD8"/>
<dbReference type="PDBsum" id="7KDF"/>
<dbReference type="PDBsum" id="8V10"/>
<dbReference type="PDBsum" id="8V11"/>
<dbReference type="SMR" id="Q04477"/>
<dbReference type="BioGRID" id="35293">
    <property type="interactions" value="555"/>
</dbReference>
<dbReference type="ComplexPortal" id="CPX-548">
    <property type="entry name" value="NDC80 complex"/>
</dbReference>
<dbReference type="DIP" id="DIP-893N"/>
<dbReference type="FunCoup" id="Q04477">
    <property type="interactions" value="183"/>
</dbReference>
<dbReference type="IntAct" id="Q04477">
    <property type="interactions" value="84"/>
</dbReference>
<dbReference type="MINT" id="Q04477"/>
<dbReference type="STRING" id="4932.YMR117C"/>
<dbReference type="iPTMnet" id="Q04477"/>
<dbReference type="PaxDb" id="4932-YMR117C"/>
<dbReference type="PeptideAtlas" id="Q04477"/>
<dbReference type="EnsemblFungi" id="YMR117C_mRNA">
    <property type="protein sequence ID" value="YMR117C"/>
    <property type="gene ID" value="YMR117C"/>
</dbReference>
<dbReference type="GeneID" id="855144"/>
<dbReference type="KEGG" id="sce:YMR117C"/>
<dbReference type="AGR" id="SGD:S000004723"/>
<dbReference type="SGD" id="S000004723">
    <property type="gene designation" value="SPC24"/>
</dbReference>
<dbReference type="VEuPathDB" id="FungiDB:YMR117C"/>
<dbReference type="eggNOG" id="ENOG502S3GS">
    <property type="taxonomic scope" value="Eukaryota"/>
</dbReference>
<dbReference type="HOGENOM" id="CLU_095757_0_0_1"/>
<dbReference type="InParanoid" id="Q04477"/>
<dbReference type="OMA" id="ENMPPNA"/>
<dbReference type="OrthoDB" id="3344830at2759"/>
<dbReference type="BioCyc" id="YEAST:G3O-32812-MONOMER"/>
<dbReference type="BioGRID-ORCS" id="855144">
    <property type="hits" value="0 hits in 10 CRISPR screens"/>
</dbReference>
<dbReference type="CD-CODE" id="876000F7">
    <property type="entry name" value="Centrosome"/>
</dbReference>
<dbReference type="EvolutionaryTrace" id="Q04477"/>
<dbReference type="PRO" id="PR:Q04477"/>
<dbReference type="Proteomes" id="UP000002311">
    <property type="component" value="Chromosome XIII"/>
</dbReference>
<dbReference type="RNAct" id="Q04477">
    <property type="molecule type" value="protein"/>
</dbReference>
<dbReference type="GO" id="GO:0000776">
    <property type="term" value="C:kinetochore"/>
    <property type="evidence" value="ECO:0000314"/>
    <property type="project" value="SGD"/>
</dbReference>
<dbReference type="GO" id="GO:0031262">
    <property type="term" value="C:Ndc80 complex"/>
    <property type="evidence" value="ECO:0000314"/>
    <property type="project" value="SGD"/>
</dbReference>
<dbReference type="GO" id="GO:0005634">
    <property type="term" value="C:nucleus"/>
    <property type="evidence" value="ECO:0007669"/>
    <property type="project" value="UniProtKB-SubCell"/>
</dbReference>
<dbReference type="GO" id="GO:0000940">
    <property type="term" value="C:outer kinetochore"/>
    <property type="evidence" value="ECO:0000314"/>
    <property type="project" value="UniProtKB"/>
</dbReference>
<dbReference type="GO" id="GO:0042802">
    <property type="term" value="F:identical protein binding"/>
    <property type="evidence" value="ECO:0000353"/>
    <property type="project" value="IntAct"/>
</dbReference>
<dbReference type="GO" id="GO:0051301">
    <property type="term" value="P:cell division"/>
    <property type="evidence" value="ECO:0007669"/>
    <property type="project" value="UniProtKB-KW"/>
</dbReference>
<dbReference type="GO" id="GO:0098653">
    <property type="term" value="P:centromere clustering"/>
    <property type="evidence" value="ECO:0000315"/>
    <property type="project" value="SGD"/>
</dbReference>
<dbReference type="GO" id="GO:0007059">
    <property type="term" value="P:chromosome segregation"/>
    <property type="evidence" value="ECO:0000315"/>
    <property type="project" value="SGD"/>
</dbReference>
<dbReference type="GO" id="GO:0031134">
    <property type="term" value="P:sister chromatid biorientation"/>
    <property type="evidence" value="ECO:0000315"/>
    <property type="project" value="UniProtKB"/>
</dbReference>
<dbReference type="CDD" id="cd11565">
    <property type="entry name" value="RWD_Spc24"/>
    <property type="match status" value="1"/>
</dbReference>
<dbReference type="Gene3D" id="3.30.160.430">
    <property type="match status" value="1"/>
</dbReference>
<dbReference type="InterPro" id="IPR013252">
    <property type="entry name" value="Ndc80_Spc24"/>
</dbReference>
<dbReference type="InterPro" id="IPR038066">
    <property type="entry name" value="Spc24_Fungi_globular_sf"/>
</dbReference>
<dbReference type="PANTHER" id="PTHR22142">
    <property type="match status" value="1"/>
</dbReference>
<dbReference type="PANTHER" id="PTHR22142:SF2">
    <property type="entry name" value="KINETOCHORE PROTEIN SPC24"/>
    <property type="match status" value="1"/>
</dbReference>
<dbReference type="Pfam" id="PF08286">
    <property type="entry name" value="Spc24"/>
    <property type="match status" value="1"/>
</dbReference>
<dbReference type="SUPFAM" id="SSF143026">
    <property type="entry name" value="Kinetochore globular domain"/>
    <property type="match status" value="1"/>
</dbReference>
<protein>
    <recommendedName>
        <fullName>Kinetochore protein SPC24</fullName>
    </recommendedName>
</protein>
<organism>
    <name type="scientific">Saccharomyces cerevisiae (strain ATCC 204508 / S288c)</name>
    <name type="common">Baker's yeast</name>
    <dbReference type="NCBI Taxonomy" id="559292"/>
    <lineage>
        <taxon>Eukaryota</taxon>
        <taxon>Fungi</taxon>
        <taxon>Dikarya</taxon>
        <taxon>Ascomycota</taxon>
        <taxon>Saccharomycotina</taxon>
        <taxon>Saccharomycetes</taxon>
        <taxon>Saccharomycetales</taxon>
        <taxon>Saccharomycetaceae</taxon>
        <taxon>Saccharomyces</taxon>
    </lineage>
</organism>
<keyword id="KW-0002">3D-structure</keyword>
<keyword id="KW-0007">Acetylation</keyword>
<keyword id="KW-0131">Cell cycle</keyword>
<keyword id="KW-0132">Cell division</keyword>
<keyword id="KW-0137">Centromere</keyword>
<keyword id="KW-0158">Chromosome</keyword>
<keyword id="KW-0175">Coiled coil</keyword>
<keyword id="KW-0995">Kinetochore</keyword>
<keyword id="KW-0498">Mitosis</keyword>
<keyword id="KW-0539">Nucleus</keyword>
<keyword id="KW-1185">Reference proteome</keyword>
<comment type="function">
    <text evidence="3 4 5">Acts as a component of the essential kinetochore-associated NDC80 complex, which is involved in chromosome segregation and spindle checkpoint activity.</text>
</comment>
<comment type="subunit">
    <text evidence="3 7">Component of the NDC80 complex, which consists of TID3/NDC80, NUF2, SPC24 and SPC25. The NDC80 complex is formed by two subcomplexes, TID3/NDC80-NUF2 and SPC24-SPC25, which are joined end-to-end through their coiled-coil domains. It has a rod-like structure with a length of 570 Angstroms and globular domains at either end. The TID3/NDC80-NUF2 globular domains are probably directed to microtubules, the SPC24-SPC25 globular domains to the centromere. Can also interact with MPS2.</text>
</comment>
<comment type="interaction">
    <interactant intactId="EBI-27228">
        <id>Q04477</id>
    </interactant>
    <interactant intactId="EBI-4182">
        <id>P32468</id>
        <label>CDC12</label>
    </interactant>
    <organismsDiffer>false</organismsDiffer>
    <experiments>3</experiments>
</comment>
<comment type="interaction">
    <interactant intactId="EBI-27228">
        <id>Q04477</id>
    </interactant>
    <interactant intactId="EBI-37386">
        <id>Q06324</id>
        <label>MMR1</label>
    </interactant>
    <organismsDiffer>false</organismsDiffer>
    <experiments>3</experiments>
</comment>
<comment type="interaction">
    <interactant intactId="EBI-27228">
        <id>Q04477</id>
    </interactant>
    <interactant intactId="EBI-23834">
        <id>P53159</id>
        <label>MPS2</label>
    </interactant>
    <organismsDiffer>false</organismsDiffer>
    <experiments>8</experiments>
</comment>
<comment type="interaction">
    <interactant intactId="EBI-27228">
        <id>Q04477</id>
    </interactant>
    <interactant intactId="EBI-25247">
        <id>P40460</id>
        <label>NDC80</label>
    </interactant>
    <organismsDiffer>false</organismsDiffer>
    <experiments>20</experiments>
</comment>
<comment type="interaction">
    <interactant intactId="EBI-27228">
        <id>Q04477</id>
    </interactant>
    <interactant intactId="EBI-12377">
        <id>P33895</id>
        <label>NUF2</label>
    </interactant>
    <organismsDiffer>false</organismsDiffer>
    <experiments>9</experiments>
</comment>
<comment type="interaction">
    <interactant intactId="EBI-27228">
        <id>Q04477</id>
    </interactant>
    <interactant intactId="EBI-23870">
        <id>P53148</id>
        <label>SPC105</label>
    </interactant>
    <organismsDiffer>false</organismsDiffer>
    <experiments>5</experiments>
</comment>
<comment type="interaction">
    <interactant intactId="EBI-27228">
        <id>Q04477</id>
    </interactant>
    <interactant intactId="EBI-27228">
        <id>Q04477</id>
        <label>SPC24</label>
    </interactant>
    <organismsDiffer>false</organismsDiffer>
    <experiments>3</experiments>
</comment>
<comment type="interaction">
    <interactant intactId="EBI-27228">
        <id>Q04477</id>
    </interactant>
    <interactant intactId="EBI-22458">
        <id>P40014</id>
        <label>SPC25</label>
    </interactant>
    <organismsDiffer>false</organismsDiffer>
    <experiments>24</experiments>
</comment>
<comment type="subcellular location">
    <subcellularLocation>
        <location evidence="2 3 4">Nucleus</location>
    </subcellularLocation>
    <subcellularLocation>
        <location evidence="2 3 4">Chromosome</location>
        <location evidence="2 3 4">Centromere</location>
        <location evidence="2 3 4">Kinetochore</location>
    </subcellularLocation>
    <text evidence="2 3 4">Associated with kinetochores.</text>
</comment>
<comment type="miscellaneous">
    <text evidence="6">Present with 1750 molecules/cell in log phase SD medium.</text>
</comment>
<comment type="similarity">
    <text evidence="8">Belongs to the SPC24 family.</text>
</comment>
<accession>Q04477</accession>
<accession>D6VZU0</accession>
<feature type="initiator methionine" description="Removed" evidence="9">
    <location>
        <position position="1"/>
    </location>
</feature>
<feature type="chain" id="PRO_0000203294" description="Kinetochore protein SPC24">
    <location>
        <begin position="2"/>
        <end position="213"/>
    </location>
</feature>
<feature type="coiled-coil region" evidence="1">
    <location>
        <begin position="54"/>
        <end position="123"/>
    </location>
</feature>
<feature type="modified residue" description="N-acetylserine" evidence="9">
    <location>
        <position position="2"/>
    </location>
</feature>
<feature type="helix" evidence="12">
    <location>
        <begin position="11"/>
        <end position="20"/>
    </location>
</feature>
<feature type="helix" evidence="12">
    <location>
        <begin position="24"/>
        <end position="48"/>
    </location>
</feature>
<feature type="helix" evidence="11">
    <location>
        <begin position="157"/>
        <end position="167"/>
    </location>
</feature>
<feature type="strand" evidence="11">
    <location>
        <begin position="170"/>
        <end position="173"/>
    </location>
</feature>
<feature type="helix" evidence="11">
    <location>
        <begin position="174"/>
        <end position="176"/>
    </location>
</feature>
<feature type="strand" evidence="11">
    <location>
        <begin position="178"/>
        <end position="181"/>
    </location>
</feature>
<feature type="strand" evidence="12">
    <location>
        <begin position="184"/>
        <end position="187"/>
    </location>
</feature>
<feature type="strand" evidence="11">
    <location>
        <begin position="190"/>
        <end position="196"/>
    </location>
</feature>
<feature type="turn" evidence="10">
    <location>
        <begin position="197"/>
        <end position="199"/>
    </location>
</feature>
<feature type="helix" evidence="11">
    <location>
        <begin position="200"/>
        <end position="211"/>
    </location>
</feature>
<proteinExistence type="evidence at protein level"/>
<name>SPC24_YEAST</name>
<reference key="1">
    <citation type="journal article" date="1997" name="Nature">
        <title>The nucleotide sequence of Saccharomyces cerevisiae chromosome XIII.</title>
        <authorList>
            <person name="Bowman S."/>
            <person name="Churcher C.M."/>
            <person name="Badcock K."/>
            <person name="Brown D."/>
            <person name="Chillingworth T."/>
            <person name="Connor R."/>
            <person name="Dedman K."/>
            <person name="Devlin K."/>
            <person name="Gentles S."/>
            <person name="Hamlin N."/>
            <person name="Hunt S."/>
            <person name="Jagels K."/>
            <person name="Lye G."/>
            <person name="Moule S."/>
            <person name="Odell C."/>
            <person name="Pearson D."/>
            <person name="Rajandream M.A."/>
            <person name="Rice P."/>
            <person name="Skelton J."/>
            <person name="Walsh S.V."/>
            <person name="Whitehead S."/>
            <person name="Barrell B.G."/>
        </authorList>
    </citation>
    <scope>NUCLEOTIDE SEQUENCE [LARGE SCALE GENOMIC DNA]</scope>
    <source>
        <strain>ATCC 204508 / S288c</strain>
    </source>
</reference>
<reference key="2">
    <citation type="journal article" date="2014" name="G3 (Bethesda)">
        <title>The reference genome sequence of Saccharomyces cerevisiae: Then and now.</title>
        <authorList>
            <person name="Engel S.R."/>
            <person name="Dietrich F.S."/>
            <person name="Fisk D.G."/>
            <person name="Binkley G."/>
            <person name="Balakrishnan R."/>
            <person name="Costanzo M.C."/>
            <person name="Dwight S.S."/>
            <person name="Hitz B.C."/>
            <person name="Karra K."/>
            <person name="Nash R.S."/>
            <person name="Weng S."/>
            <person name="Wong E.D."/>
            <person name="Lloyd P."/>
            <person name="Skrzypek M.S."/>
            <person name="Miyasato S.R."/>
            <person name="Simison M."/>
            <person name="Cherry J.M."/>
        </authorList>
    </citation>
    <scope>GENOME REANNOTATION</scope>
    <source>
        <strain>ATCC 204508 / S288c</strain>
    </source>
</reference>
<reference key="3">
    <citation type="journal article" date="2001" name="EMBO J.">
        <title>The budding yeast proteins Spc24p and Spc25p interact with Ndc80p and Nuf2p at the kinetochore and are important for kinetochore clustering and checkpoint control.</title>
        <authorList>
            <person name="Janke C."/>
            <person name="Ortiz J."/>
            <person name="Lechner J."/>
            <person name="Shevchenko A."/>
            <person name="Shevchenko A."/>
            <person name="Magiera M.M."/>
            <person name="Schramm C."/>
            <person name="Schiebel E."/>
        </authorList>
    </citation>
    <scope>SUBCELLULAR LOCATION</scope>
    <scope>INTERACTION WITH TID3 AND NUF2</scope>
</reference>
<reference key="4">
    <citation type="journal article" date="2001" name="J. Cell Biol.">
        <title>The Ndc80p complex from Saccharomyces cerevisiae contains conserved centromere components and has a function in chromosome segregation.</title>
        <authorList>
            <person name="Wigge P.A."/>
            <person name="Kilmartin J.V."/>
        </authorList>
    </citation>
    <scope>FUNCTION OF THE NDC80 COMPLEX</scope>
    <scope>SUBCELLULAR LOCATION</scope>
    <scope>IDENTIFICATION IN THE NDC80 COMPLEX</scope>
</reference>
<reference key="5">
    <citation type="journal article" date="2002" name="Mol. Microbiol.">
        <title>Spc24 interacts with Mps2 and is required for chromosome segregation, but is not implicated in spindle pole body duplication.</title>
        <authorList>
            <person name="Le Masson I."/>
            <person name="Saveanu C."/>
            <person name="Chevalier A."/>
            <person name="Namane A."/>
            <person name="Gobin R."/>
            <person name="Fromont-Racine M."/>
            <person name="Jacquier A."/>
            <person name="Mann C."/>
        </authorList>
    </citation>
    <scope>FUNCTION</scope>
    <scope>INTERACTION WITH MPS2; NDC80 AND SPC25</scope>
    <scope>SUBCELLULAR LOCATION</scope>
</reference>
<reference key="6">
    <citation type="journal article" date="2003" name="Genes Dev.">
        <title>The highly conserved Ndc80 complex is required for kinetochore assembly, chromosome congression, and spindle checkpoint activity.</title>
        <authorList>
            <person name="McCleland M.L."/>
            <person name="Gardner R.D."/>
            <person name="Kallio M.J."/>
            <person name="Daum J.R."/>
            <person name="Gorbsky G.J."/>
            <person name="Burke D.J."/>
            <person name="Stukenberg P.T."/>
        </authorList>
    </citation>
    <scope>FUNCTION OF THE NDC80 COMPLEX</scope>
</reference>
<reference key="7">
    <citation type="journal article" date="2003" name="Nature">
        <title>Global analysis of protein expression in yeast.</title>
        <authorList>
            <person name="Ghaemmaghami S."/>
            <person name="Huh W.-K."/>
            <person name="Bower K."/>
            <person name="Howson R.W."/>
            <person name="Belle A."/>
            <person name="Dephoure N."/>
            <person name="O'Shea E.K."/>
            <person name="Weissman J.S."/>
        </authorList>
    </citation>
    <scope>LEVEL OF PROTEIN EXPRESSION [LARGE SCALE ANALYSIS]</scope>
</reference>
<reference key="8">
    <citation type="journal article" date="2004" name="Mol. Biol. Cell">
        <title>The fission yeast kinetochore component Spc7 associates with the EB1 family member Mal3 and is required for kinetochore-spindle association.</title>
        <authorList>
            <person name="Kerres A."/>
            <person name="Vietmeier-Decker C."/>
            <person name="Ortiz J."/>
            <person name="Karig I."/>
            <person name="Beuter C."/>
            <person name="Hegemann J."/>
            <person name="Lechner J."/>
            <person name="Fleig U."/>
        </authorList>
    </citation>
    <scope>IDENTIFICATION IN THE NDC80 COMPLEX</scope>
</reference>
<reference key="9">
    <citation type="journal article" date="2008" name="Mol. Cell. Proteomics">
        <title>A multidimensional chromatography technology for in-depth phosphoproteome analysis.</title>
        <authorList>
            <person name="Albuquerque C.P."/>
            <person name="Smolka M.B."/>
            <person name="Payne S.H."/>
            <person name="Bafna V."/>
            <person name="Eng J."/>
            <person name="Zhou H."/>
        </authorList>
    </citation>
    <scope>IDENTIFICATION BY MASS SPECTROMETRY [LARGE SCALE ANALYSIS]</scope>
</reference>
<reference key="10">
    <citation type="journal article" date="2012" name="Proc. Natl. Acad. Sci. U.S.A.">
        <title>N-terminal acetylome analyses and functional insights of the N-terminal acetyltransferase NatB.</title>
        <authorList>
            <person name="Van Damme P."/>
            <person name="Lasa M."/>
            <person name="Polevoda B."/>
            <person name="Gazquez C."/>
            <person name="Elosegui-Artola A."/>
            <person name="Kim D.S."/>
            <person name="De Juan-Pardo E."/>
            <person name="Demeyer K."/>
            <person name="Hole K."/>
            <person name="Larrea E."/>
            <person name="Timmerman E."/>
            <person name="Prieto J."/>
            <person name="Arnesen T."/>
            <person name="Sherman F."/>
            <person name="Gevaert K."/>
            <person name="Aldabe R."/>
        </authorList>
    </citation>
    <scope>ACETYLATION [LARGE SCALE ANALYSIS] AT SER-2</scope>
    <scope>CLEAVAGE OF INITIATOR METHIONINE [LARGE SCALE ANALYSIS]</scope>
    <scope>IDENTIFICATION BY MASS SPECTROMETRY [LARGE SCALE ANALYSIS]</scope>
</reference>
<reference key="11">
    <citation type="journal article" date="2005" name="Proc. Natl. Acad. Sci. U.S.A.">
        <title>Molecular organization of the Ndc80 complex, an essential kinetochore component.</title>
        <authorList>
            <person name="Wei R.R."/>
            <person name="Sorger P.K."/>
            <person name="Harrison S.C."/>
        </authorList>
    </citation>
    <scope>3D-STRUCTURE MODELING OF THE NDC80 COMPLEX</scope>
</reference>
<evidence type="ECO:0000255" key="1"/>
<evidence type="ECO:0000269" key="2">
    <source>
    </source>
</evidence>
<evidence type="ECO:0000269" key="3">
    <source>
    </source>
</evidence>
<evidence type="ECO:0000269" key="4">
    <source>
    </source>
</evidence>
<evidence type="ECO:0000269" key="5">
    <source>
    </source>
</evidence>
<evidence type="ECO:0000269" key="6">
    <source>
    </source>
</evidence>
<evidence type="ECO:0000269" key="7">
    <source>
    </source>
</evidence>
<evidence type="ECO:0000305" key="8"/>
<evidence type="ECO:0007744" key="9">
    <source>
    </source>
</evidence>
<evidence type="ECO:0007829" key="10">
    <source>
        <dbReference type="PDB" id="2FV4"/>
    </source>
</evidence>
<evidence type="ECO:0007829" key="11">
    <source>
        <dbReference type="PDB" id="5T6J"/>
    </source>
</evidence>
<evidence type="ECO:0007829" key="12">
    <source>
        <dbReference type="PDB" id="7KDF"/>
    </source>
</evidence>
<sequence>MSQKDNLLDNPVEFLKEVRESFDIQQDVDAMKRIRHDLDVIKEESEARISKEHSKVSESNKKLNAERINVAKLEGDLEYTNEESNEFGSKDELVKLLKDLDGLERNIVSLRSELDEKMKLYLKDSEIISTPNGSKIKAKVIEPELEEQSAVTPEANENILKLKLYRSLGVILDLENDQVLINRKNDGNIDILPLDNNLSDFYKTKYIWERLGK</sequence>